<feature type="chain" id="PRO_1000136900" description="UPF0283 membrane protein YcjF">
    <location>
        <begin position="1"/>
        <end position="353"/>
    </location>
</feature>
<feature type="transmembrane region" description="Helical" evidence="1">
    <location>
        <begin position="70"/>
        <end position="90"/>
    </location>
</feature>
<feature type="transmembrane region" description="Helical" evidence="1">
    <location>
        <begin position="100"/>
        <end position="120"/>
    </location>
</feature>
<feature type="transmembrane region" description="Helical" evidence="1">
    <location>
        <begin position="213"/>
        <end position="233"/>
    </location>
</feature>
<comment type="subcellular location">
    <subcellularLocation>
        <location evidence="1">Cell inner membrane</location>
        <topology evidence="1">Multi-pass membrane protein</topology>
    </subcellularLocation>
</comment>
<comment type="similarity">
    <text evidence="1">Belongs to the UPF0283 family.</text>
</comment>
<accession>B4TWZ4</accession>
<evidence type="ECO:0000255" key="1">
    <source>
        <dbReference type="HAMAP-Rule" id="MF_01085"/>
    </source>
</evidence>
<organism>
    <name type="scientific">Salmonella schwarzengrund (strain CVM19633)</name>
    <dbReference type="NCBI Taxonomy" id="439843"/>
    <lineage>
        <taxon>Bacteria</taxon>
        <taxon>Pseudomonadati</taxon>
        <taxon>Pseudomonadota</taxon>
        <taxon>Gammaproteobacteria</taxon>
        <taxon>Enterobacterales</taxon>
        <taxon>Enterobacteriaceae</taxon>
        <taxon>Salmonella</taxon>
    </lineage>
</organism>
<reference key="1">
    <citation type="journal article" date="2011" name="J. Bacteriol.">
        <title>Comparative genomics of 28 Salmonella enterica isolates: evidence for CRISPR-mediated adaptive sublineage evolution.</title>
        <authorList>
            <person name="Fricke W.F."/>
            <person name="Mammel M.K."/>
            <person name="McDermott P.F."/>
            <person name="Tartera C."/>
            <person name="White D.G."/>
            <person name="Leclerc J.E."/>
            <person name="Ravel J."/>
            <person name="Cebula T.A."/>
        </authorList>
    </citation>
    <scope>NUCLEOTIDE SEQUENCE [LARGE SCALE GENOMIC DNA]</scope>
    <source>
        <strain>CVM19633</strain>
    </source>
</reference>
<protein>
    <recommendedName>
        <fullName evidence="1">UPF0283 membrane protein YcjF</fullName>
    </recommendedName>
</protein>
<dbReference type="EMBL" id="CP001127">
    <property type="protein sequence ID" value="ACF89307.1"/>
    <property type="molecule type" value="Genomic_DNA"/>
</dbReference>
<dbReference type="RefSeq" id="WP_001294478.1">
    <property type="nucleotide sequence ID" value="NC_011094.1"/>
</dbReference>
<dbReference type="KEGG" id="sew:SeSA_A1809"/>
<dbReference type="HOGENOM" id="CLU_057693_2_0_6"/>
<dbReference type="Proteomes" id="UP000001865">
    <property type="component" value="Chromosome"/>
</dbReference>
<dbReference type="GO" id="GO:0005886">
    <property type="term" value="C:plasma membrane"/>
    <property type="evidence" value="ECO:0007669"/>
    <property type="project" value="UniProtKB-SubCell"/>
</dbReference>
<dbReference type="HAMAP" id="MF_01085">
    <property type="entry name" value="UPF0283"/>
    <property type="match status" value="1"/>
</dbReference>
<dbReference type="InterPro" id="IPR021147">
    <property type="entry name" value="DUF697"/>
</dbReference>
<dbReference type="InterPro" id="IPR006507">
    <property type="entry name" value="UPF0283"/>
</dbReference>
<dbReference type="NCBIfam" id="TIGR01620">
    <property type="entry name" value="hyp_HI0043"/>
    <property type="match status" value="1"/>
</dbReference>
<dbReference type="PANTHER" id="PTHR39342">
    <property type="entry name" value="UPF0283 MEMBRANE PROTEIN YCJF"/>
    <property type="match status" value="1"/>
</dbReference>
<dbReference type="PANTHER" id="PTHR39342:SF1">
    <property type="entry name" value="UPF0283 MEMBRANE PROTEIN YCJF"/>
    <property type="match status" value="1"/>
</dbReference>
<dbReference type="Pfam" id="PF05128">
    <property type="entry name" value="DUF697"/>
    <property type="match status" value="1"/>
</dbReference>
<sequence length="353" mass="39305">MSEPLKPRIDFAEPLKEEPTSVFKAQQTFSEAESRTFAPAAIDERPEDEGVAEAAVDAALRPKRSLWRKMVMGGLALFGASVVGQGVQWTMNAWQTQDWVALGGCAAGALIVGAGVGSVVTEWRRLWRLRQRAHERDEARELLHSHSVGKGRAFCEKLAQQAGIDQSHPALQRWYAAIHETQNDREIVGLYAHLVQPVLDAQARREISRFAAESTLMIAVSPLALVDMAFIAWRNLRLINRIATLYGIELGYYSRLRLFRLVLLNIAFAGASELVREVGMDWMSQDLAARLSTRAAQGIGAGLLTARLGIKAMELCRPLPWIDNDKPRLGDFRRQLIGQLKETLQKSKSSPEK</sequence>
<gene>
    <name evidence="1" type="primary">ycjF</name>
    <name type="ordered locus">SeSA_A1809</name>
</gene>
<proteinExistence type="inferred from homology"/>
<keyword id="KW-0997">Cell inner membrane</keyword>
<keyword id="KW-1003">Cell membrane</keyword>
<keyword id="KW-0472">Membrane</keyword>
<keyword id="KW-0812">Transmembrane</keyword>
<keyword id="KW-1133">Transmembrane helix</keyword>
<name>YCJF_SALSV</name>